<name>DISP1_HUMAN</name>
<reference key="1">
    <citation type="journal article" date="2004" name="Genome Res.">
        <title>The status, quality, and expansion of the NIH full-length cDNA project: the Mammalian Gene Collection (MGC).</title>
        <authorList>
            <consortium name="The MGC Project Team"/>
        </authorList>
    </citation>
    <scope>NUCLEOTIDE SEQUENCE [LARGE SCALE MRNA]</scope>
    <source>
        <tissue>Colon</tissue>
        <tissue>Muscle</tissue>
    </source>
</reference>
<reference key="2">
    <citation type="journal article" date="2004" name="Nat. Genet.">
        <title>Complete sequencing and characterization of 21,243 full-length human cDNAs.</title>
        <authorList>
            <person name="Ota T."/>
            <person name="Suzuki Y."/>
            <person name="Nishikawa T."/>
            <person name="Otsuki T."/>
            <person name="Sugiyama T."/>
            <person name="Irie R."/>
            <person name="Wakamatsu A."/>
            <person name="Hayashi K."/>
            <person name="Sato H."/>
            <person name="Nagai K."/>
            <person name="Kimura K."/>
            <person name="Makita H."/>
            <person name="Sekine M."/>
            <person name="Obayashi M."/>
            <person name="Nishi T."/>
            <person name="Shibahara T."/>
            <person name="Tanaka T."/>
            <person name="Ishii S."/>
            <person name="Yamamoto J."/>
            <person name="Saito K."/>
            <person name="Kawai Y."/>
            <person name="Isono Y."/>
            <person name="Nakamura Y."/>
            <person name="Nagahari K."/>
            <person name="Murakami K."/>
            <person name="Yasuda T."/>
            <person name="Iwayanagi T."/>
            <person name="Wagatsuma M."/>
            <person name="Shiratori A."/>
            <person name="Sudo H."/>
            <person name="Hosoiri T."/>
            <person name="Kaku Y."/>
            <person name="Kodaira H."/>
            <person name="Kondo H."/>
            <person name="Sugawara M."/>
            <person name="Takahashi M."/>
            <person name="Kanda K."/>
            <person name="Yokoi T."/>
            <person name="Furuya T."/>
            <person name="Kikkawa E."/>
            <person name="Omura Y."/>
            <person name="Abe K."/>
            <person name="Kamihara K."/>
            <person name="Katsuta N."/>
            <person name="Sato K."/>
            <person name="Tanikawa M."/>
            <person name="Yamazaki M."/>
            <person name="Ninomiya K."/>
            <person name="Ishibashi T."/>
            <person name="Yamashita H."/>
            <person name="Murakawa K."/>
            <person name="Fujimori K."/>
            <person name="Tanai H."/>
            <person name="Kimata M."/>
            <person name="Watanabe M."/>
            <person name="Hiraoka S."/>
            <person name="Chiba Y."/>
            <person name="Ishida S."/>
            <person name="Ono Y."/>
            <person name="Takiguchi S."/>
            <person name="Watanabe S."/>
            <person name="Yosida M."/>
            <person name="Hotuta T."/>
            <person name="Kusano J."/>
            <person name="Kanehori K."/>
            <person name="Takahashi-Fujii A."/>
            <person name="Hara H."/>
            <person name="Tanase T.-O."/>
            <person name="Nomura Y."/>
            <person name="Togiya S."/>
            <person name="Komai F."/>
            <person name="Hara R."/>
            <person name="Takeuchi K."/>
            <person name="Arita M."/>
            <person name="Imose N."/>
            <person name="Musashino K."/>
            <person name="Yuuki H."/>
            <person name="Oshima A."/>
            <person name="Sasaki N."/>
            <person name="Aotsuka S."/>
            <person name="Yoshikawa Y."/>
            <person name="Matsunawa H."/>
            <person name="Ichihara T."/>
            <person name="Shiohata N."/>
            <person name="Sano S."/>
            <person name="Moriya S."/>
            <person name="Momiyama H."/>
            <person name="Satoh N."/>
            <person name="Takami S."/>
            <person name="Terashima Y."/>
            <person name="Suzuki O."/>
            <person name="Nakagawa S."/>
            <person name="Senoh A."/>
            <person name="Mizoguchi H."/>
            <person name="Goto Y."/>
            <person name="Shimizu F."/>
            <person name="Wakebe H."/>
            <person name="Hishigaki H."/>
            <person name="Watanabe T."/>
            <person name="Sugiyama A."/>
            <person name="Takemoto M."/>
            <person name="Kawakami B."/>
            <person name="Yamazaki M."/>
            <person name="Watanabe K."/>
            <person name="Kumagai A."/>
            <person name="Itakura S."/>
            <person name="Fukuzumi Y."/>
            <person name="Fujimori Y."/>
            <person name="Komiyama M."/>
            <person name="Tashiro H."/>
            <person name="Tanigami A."/>
            <person name="Fujiwara T."/>
            <person name="Ono T."/>
            <person name="Yamada K."/>
            <person name="Fujii Y."/>
            <person name="Ozaki K."/>
            <person name="Hirao M."/>
            <person name="Ohmori Y."/>
            <person name="Kawabata A."/>
            <person name="Hikiji T."/>
            <person name="Kobatake N."/>
            <person name="Inagaki H."/>
            <person name="Ikema Y."/>
            <person name="Okamoto S."/>
            <person name="Okitani R."/>
            <person name="Kawakami T."/>
            <person name="Noguchi S."/>
            <person name="Itoh T."/>
            <person name="Shigeta K."/>
            <person name="Senba T."/>
            <person name="Matsumura K."/>
            <person name="Nakajima Y."/>
            <person name="Mizuno T."/>
            <person name="Morinaga M."/>
            <person name="Sasaki M."/>
            <person name="Togashi T."/>
            <person name="Oyama M."/>
            <person name="Hata H."/>
            <person name="Watanabe M."/>
            <person name="Komatsu T."/>
            <person name="Mizushima-Sugano J."/>
            <person name="Satoh T."/>
            <person name="Shirai Y."/>
            <person name="Takahashi Y."/>
            <person name="Nakagawa K."/>
            <person name="Okumura K."/>
            <person name="Nagase T."/>
            <person name="Nomura N."/>
            <person name="Kikuchi H."/>
            <person name="Masuho Y."/>
            <person name="Yamashita R."/>
            <person name="Nakai K."/>
            <person name="Yada T."/>
            <person name="Nakamura Y."/>
            <person name="Ohara O."/>
            <person name="Isogai T."/>
            <person name="Sugano S."/>
        </authorList>
    </citation>
    <scope>NUCLEOTIDE SEQUENCE [LARGE SCALE MRNA] OF 1-512 AND 596-1524</scope>
    <source>
        <tissue>Kidney epithelium</tissue>
        <tissue>Placenta</tissue>
        <tissue>Testis</tissue>
    </source>
</reference>
<reference key="3">
    <citation type="journal article" date="2007" name="BMC Genomics">
        <title>The full-ORF clone resource of the German cDNA consortium.</title>
        <authorList>
            <person name="Bechtel S."/>
            <person name="Rosenfelder H."/>
            <person name="Duda A."/>
            <person name="Schmidt C.P."/>
            <person name="Ernst U."/>
            <person name="Wellenreuther R."/>
            <person name="Mehrle A."/>
            <person name="Schuster C."/>
            <person name="Bahr A."/>
            <person name="Bloecker H."/>
            <person name="Heubner D."/>
            <person name="Hoerlein A."/>
            <person name="Michel G."/>
            <person name="Wedler H."/>
            <person name="Koehrer K."/>
            <person name="Ottenwaelder B."/>
            <person name="Poustka A."/>
            <person name="Wiemann S."/>
            <person name="Schupp I."/>
        </authorList>
    </citation>
    <scope>NUCLEOTIDE SEQUENCE [LARGE SCALE MRNA] OF 768-1524</scope>
    <source>
        <tissue>Testis</tissue>
    </source>
</reference>
<reference key="4">
    <citation type="journal article" date="2012" name="Cell Rep.">
        <title>Dispatched and scube mediate the efficient secretion of the cholesterol-modified hedgehog ligand.</title>
        <authorList>
            <person name="Tukachinsky H."/>
            <person name="Kuzmickas R.P."/>
            <person name="Jao C.Y."/>
            <person name="Liu J."/>
            <person name="Salic A."/>
        </authorList>
    </citation>
    <scope>FUNCTION</scope>
    <scope>INTERACTION WITH SHH</scope>
</reference>
<sequence length="1524" mass="170934">MAMSNGNNDFVVLSNSSIATSAANPSPLTPCDGDHAAQQLTPKEATRTKVSPNGCLQLNGTVKSSFLPLDNQRMPQMLPQCCHPCPYHHPLTSHSSHQECHPEAGPAAPSALASCCMQPHSEYSASLCPNHSPVYQTTCCLQPSPSFCLHHPWPDHFQHQPVQQHIANIRPSRPFKLPKSYAALIADWPVVVLGMCTMFIVVCALVGVLVPELPDFSDPLLGFEPRGTAIGQRLVTWNNMVKNTGYKATLANYPFKYADEQAKSHRDDRWSDDHYEREKREVDWNFHKDSFFCDVPSDRYSRVVFTSSGGETLWNLPAIKSMCNVDNSRIRSHPQFGDLCQRTTAASCCPSWTLGNYIAILNNRSSCQKIVERDVSHTLKLLRTCAKHYQNGTLGPDCWDMAARRKDQLKCTNVPRKCTKYNAVYQILHYLVDKDFMTPKTADYATPALKYSMLFSPTEKGESMMNIYLDNFENWNSSDGVTTITGIEFGIKHSLFQDYLLMDTVYPAIAIVIVLLVMCVYTKSMFITLMTMFAIISSLIVSYFLYRVVFHFEFFPFMNLTALIILVGIGADDAFVLCDVWNYTKFDKPHAETSETVSITLQHAALSMFVTSFTTAAAFYANYVSNITAIRCFGVYAGTAILVNYVLMVTWLPAVVVLHERYLLNIFTCFKKPQQQIYDNKSCWTVACQKCHKVLFAISEASRIFFEKVLPCIVIKFRYLWLFWFLALTVGGAYIVCINPKMKLPSLELSEFQVFRSSHPFERYDAEYKKLFMFERVHHGEELHMPITVIWGVSPEDNGNPLNPKSKGKLTLDSSFNIASPASQAWILHFCQKLRNQTFFYQTDEQDFTSCFIETFKQWMENQDCDEPALYPCCSHWSFPYKQEIFELCIKRAIMELERSTGYHLDSKTPGPRFDINDTIRAVVLEFQSTYLFTLAYEKMHQFYKEVDSWISSELSSAPEGLSNGWFVSNLEFYDLQDSLSDGTLIAMGLSVAVAFSVMLLTTWNIIISLYAIISIAGTIFVTVGSLVLLGWELNVLESVTISVAVGLSVDFAVHYGVAYRLAPDPDREGKVIFSLSRVGSAMAMAALTTFVAGAMMMPSTVLAYTQLGTFMMLIMCISWAFATFFFQCMCRCLGPQGTCGQIPLPKKLQCSAFSHALSTSPSDKGQSKTHTINAYHLDPRGPKSELEHEFYELEPLASHSCTAPEKTTYEETHICSEFFNSQAKNLGMPVHAAYNSELSKSTESDAGSALLQPPLEQHTVCHFFSLNQRCSCPDAYKHLNYGPHSCQQMGDCLCHQCSPTTSSFVQIQNGVAPLKATHQAVEGFVHPITHIHHCPCLQGRVKPAGMQNSLPRNFFLHPVQHIQAQEKIGKTNVHSLQRSIEEHLPKMAEPSSFVCRSTGSLLKTCCDPENKQRELCKNRDVSNLESSGGTENKAGGKVELSLSQTDASVNSEHFNQNEPKVLFNHLMGEAGCRSCPNNSQSCGRIVRVKCNSVDCQMPNMEANVPAVLTHSELSGESLLIKTL</sequence>
<proteinExistence type="evidence at protein level"/>
<protein>
    <recommendedName>
        <fullName>Protein dispatched homolog 1</fullName>
    </recommendedName>
</protein>
<evidence type="ECO:0000250" key="1">
    <source>
        <dbReference type="UniProtKB" id="Q3TDN0"/>
    </source>
</evidence>
<evidence type="ECO:0000255" key="2"/>
<evidence type="ECO:0000255" key="3">
    <source>
        <dbReference type="PROSITE-ProRule" id="PRU00199"/>
    </source>
</evidence>
<evidence type="ECO:0000269" key="4">
    <source>
    </source>
</evidence>
<evidence type="ECO:0000305" key="5"/>
<dbReference type="EMBL" id="BC007734">
    <property type="protein sequence ID" value="AAH07734.1"/>
    <property type="status" value="ALT_SEQ"/>
    <property type="molecule type" value="mRNA"/>
</dbReference>
<dbReference type="EMBL" id="BC011542">
    <property type="protein sequence ID" value="AAH11542.2"/>
    <property type="molecule type" value="mRNA"/>
</dbReference>
<dbReference type="EMBL" id="AK023679">
    <property type="protein sequence ID" value="BAB14637.1"/>
    <property type="status" value="ALT_FRAME"/>
    <property type="molecule type" value="mRNA"/>
</dbReference>
<dbReference type="EMBL" id="AK026114">
    <property type="protein sequence ID" value="BAB15365.1"/>
    <property type="status" value="ALT_INIT"/>
    <property type="molecule type" value="mRNA"/>
</dbReference>
<dbReference type="EMBL" id="AK098669">
    <property type="protein sequence ID" value="BAC05373.1"/>
    <property type="molecule type" value="mRNA"/>
</dbReference>
<dbReference type="EMBL" id="AL133092">
    <property type="protein sequence ID" value="CAB61406.1"/>
    <property type="molecule type" value="mRNA"/>
</dbReference>
<dbReference type="CCDS" id="CCDS1536.1"/>
<dbReference type="PIR" id="T42693">
    <property type="entry name" value="T42693"/>
</dbReference>
<dbReference type="RefSeq" id="NP_001356523.1">
    <property type="nucleotide sequence ID" value="NM_001369594.1"/>
</dbReference>
<dbReference type="RefSeq" id="NP_001364157.1">
    <property type="nucleotide sequence ID" value="NM_001377228.1"/>
</dbReference>
<dbReference type="RefSeq" id="NP_001364158.1">
    <property type="nucleotide sequence ID" value="NM_001377229.1"/>
</dbReference>
<dbReference type="RefSeq" id="NP_116279.2">
    <property type="nucleotide sequence ID" value="NM_032890.3"/>
</dbReference>
<dbReference type="RefSeq" id="XP_005273392.1">
    <property type="nucleotide sequence ID" value="XM_005273335.2"/>
</dbReference>
<dbReference type="RefSeq" id="XP_006711655.1">
    <property type="nucleotide sequence ID" value="XM_006711592.3"/>
</dbReference>
<dbReference type="RefSeq" id="XP_011508374.1">
    <property type="nucleotide sequence ID" value="XM_011510072.3"/>
</dbReference>
<dbReference type="RefSeq" id="XP_011508375.1">
    <property type="nucleotide sequence ID" value="XM_011510073.3"/>
</dbReference>
<dbReference type="RefSeq" id="XP_011508376.1">
    <property type="nucleotide sequence ID" value="XM_011510074.3"/>
</dbReference>
<dbReference type="RefSeq" id="XP_011508377.1">
    <property type="nucleotide sequence ID" value="XM_011510075.3"/>
</dbReference>
<dbReference type="RefSeq" id="XP_011508379.1">
    <property type="nucleotide sequence ID" value="XM_011510077.2"/>
</dbReference>
<dbReference type="RefSeq" id="XP_016858100.1">
    <property type="nucleotide sequence ID" value="XM_017002611.2"/>
</dbReference>
<dbReference type="RefSeq" id="XP_047288719.1">
    <property type="nucleotide sequence ID" value="XM_047432763.1"/>
</dbReference>
<dbReference type="PDB" id="6XE6">
    <property type="method" value="EM"/>
    <property type="resolution" value="4.54 A"/>
    <property type="chains" value="A=172-1249"/>
</dbReference>
<dbReference type="PDB" id="7E2G">
    <property type="method" value="EM"/>
    <property type="resolution" value="3.61 A"/>
    <property type="chains" value="D=1-262, D=281-1524"/>
</dbReference>
<dbReference type="PDB" id="7E2H">
    <property type="method" value="EM"/>
    <property type="resolution" value="3.68 A"/>
    <property type="chains" value="D=1-262, E=281-1524"/>
</dbReference>
<dbReference type="PDB" id="7E2I">
    <property type="method" value="EM"/>
    <property type="resolution" value="4.07 A"/>
    <property type="chains" value="D=1-1524"/>
</dbReference>
<dbReference type="PDBsum" id="6XE6"/>
<dbReference type="PDBsum" id="7E2G"/>
<dbReference type="PDBsum" id="7E2H"/>
<dbReference type="PDBsum" id="7E2I"/>
<dbReference type="EMDB" id="EMD-22144"/>
<dbReference type="EMDB" id="EMD-30956"/>
<dbReference type="EMDB" id="EMD-30957"/>
<dbReference type="EMDB" id="EMD-30958"/>
<dbReference type="SMR" id="Q96F81"/>
<dbReference type="BioGRID" id="124405">
    <property type="interactions" value="16"/>
</dbReference>
<dbReference type="FunCoup" id="Q96F81">
    <property type="interactions" value="387"/>
</dbReference>
<dbReference type="IntAct" id="Q96F81">
    <property type="interactions" value="9"/>
</dbReference>
<dbReference type="STRING" id="9606.ENSP00000284476"/>
<dbReference type="GlyCosmos" id="Q96F81">
    <property type="glycosylation" value="2 sites, No reported glycans"/>
</dbReference>
<dbReference type="GlyGen" id="Q96F81">
    <property type="glycosylation" value="6 sites, 2 N-linked glycans (3 sites)"/>
</dbReference>
<dbReference type="iPTMnet" id="Q96F81"/>
<dbReference type="PhosphoSitePlus" id="Q96F81"/>
<dbReference type="BioMuta" id="DISP1"/>
<dbReference type="DMDM" id="160380707"/>
<dbReference type="jPOST" id="Q96F81"/>
<dbReference type="MassIVE" id="Q96F81"/>
<dbReference type="PaxDb" id="9606-ENSP00000284476"/>
<dbReference type="PeptideAtlas" id="Q96F81"/>
<dbReference type="ProteomicsDB" id="76499"/>
<dbReference type="Antibodypedia" id="34633">
    <property type="antibodies" value="142 antibodies from 31 providers"/>
</dbReference>
<dbReference type="DNASU" id="84976"/>
<dbReference type="Ensembl" id="ENST00000284476.7">
    <property type="protein sequence ID" value="ENSP00000284476.6"/>
    <property type="gene ID" value="ENSG00000154309.9"/>
</dbReference>
<dbReference type="Ensembl" id="ENST00000675039.1">
    <property type="protein sequence ID" value="ENSP00000501574.1"/>
    <property type="gene ID" value="ENSG00000154309.9"/>
</dbReference>
<dbReference type="Ensembl" id="ENST00000675850.1">
    <property type="protein sequence ID" value="ENSP00000502357.1"/>
    <property type="gene ID" value="ENSG00000154309.9"/>
</dbReference>
<dbReference type="Ensembl" id="ENST00000675961.1">
    <property type="protein sequence ID" value="ENSP00000501808.1"/>
    <property type="gene ID" value="ENSG00000154309.9"/>
</dbReference>
<dbReference type="GeneID" id="84976"/>
<dbReference type="KEGG" id="hsa:84976"/>
<dbReference type="MANE-Select" id="ENST00000675850.1">
    <property type="protein sequence ID" value="ENSP00000502357.1"/>
    <property type="RefSeq nucleotide sequence ID" value="NM_001377229.1"/>
    <property type="RefSeq protein sequence ID" value="NP_001364158.1"/>
</dbReference>
<dbReference type="UCSC" id="uc057prm.1">
    <property type="organism name" value="human"/>
</dbReference>
<dbReference type="AGR" id="HGNC:19711"/>
<dbReference type="CTD" id="84976"/>
<dbReference type="DisGeNET" id="84976"/>
<dbReference type="GeneCards" id="DISP1"/>
<dbReference type="GeneReviews" id="DISP1"/>
<dbReference type="HGNC" id="HGNC:19711">
    <property type="gene designation" value="DISP1"/>
</dbReference>
<dbReference type="HPA" id="ENSG00000154309">
    <property type="expression patterns" value="Low tissue specificity"/>
</dbReference>
<dbReference type="MalaCards" id="DISP1"/>
<dbReference type="MIM" id="607502">
    <property type="type" value="gene"/>
</dbReference>
<dbReference type="neXtProt" id="NX_Q96F81"/>
<dbReference type="OpenTargets" id="ENSG00000154309"/>
<dbReference type="Orphanet" id="93925">
    <property type="disease" value="Alobar holoprosencephaly"/>
</dbReference>
<dbReference type="Orphanet" id="93924">
    <property type="disease" value="Lobar holoprosencephaly"/>
</dbReference>
<dbReference type="Orphanet" id="280200">
    <property type="disease" value="Microform holoprosencephaly"/>
</dbReference>
<dbReference type="Orphanet" id="93926">
    <property type="disease" value="Midline interhemispheric variant of holoprosencephaly"/>
</dbReference>
<dbReference type="Orphanet" id="220386">
    <property type="disease" value="Semilobar holoprosencephaly"/>
</dbReference>
<dbReference type="Orphanet" id="280195">
    <property type="disease" value="Septopreoptic holoprosencephaly"/>
</dbReference>
<dbReference type="PharmGKB" id="PA134938043"/>
<dbReference type="VEuPathDB" id="HostDB:ENSG00000154309"/>
<dbReference type="eggNOG" id="KOG3664">
    <property type="taxonomic scope" value="Eukaryota"/>
</dbReference>
<dbReference type="GeneTree" id="ENSGT00940000157407"/>
<dbReference type="HOGENOM" id="CLU_004076_1_0_1"/>
<dbReference type="InParanoid" id="Q96F81"/>
<dbReference type="OMA" id="NGLLAMC"/>
<dbReference type="OrthoDB" id="193905at2759"/>
<dbReference type="PAN-GO" id="Q96F81">
    <property type="GO annotations" value="4 GO annotations based on evolutionary models"/>
</dbReference>
<dbReference type="PhylomeDB" id="Q96F81"/>
<dbReference type="TreeFam" id="TF324144"/>
<dbReference type="PathwayCommons" id="Q96F81"/>
<dbReference type="SignaLink" id="Q96F81"/>
<dbReference type="SIGNOR" id="Q96F81"/>
<dbReference type="BioGRID-ORCS" id="84976">
    <property type="hits" value="7 hits in 1148 CRISPR screens"/>
</dbReference>
<dbReference type="ChiTaRS" id="DISP1">
    <property type="organism name" value="human"/>
</dbReference>
<dbReference type="GenomeRNAi" id="84976"/>
<dbReference type="Pharos" id="Q96F81">
    <property type="development level" value="Tbio"/>
</dbReference>
<dbReference type="PRO" id="PR:Q96F81"/>
<dbReference type="Proteomes" id="UP000005640">
    <property type="component" value="Chromosome 1"/>
</dbReference>
<dbReference type="RNAct" id="Q96F81">
    <property type="molecule type" value="protein"/>
</dbReference>
<dbReference type="Bgee" id="ENSG00000154309">
    <property type="expression patterns" value="Expressed in male germ line stem cell (sensu Vertebrata) in testis and 151 other cell types or tissues"/>
</dbReference>
<dbReference type="ExpressionAtlas" id="Q96F81">
    <property type="expression patterns" value="baseline and differential"/>
</dbReference>
<dbReference type="GO" id="GO:0016323">
    <property type="term" value="C:basolateral plasma membrane"/>
    <property type="evidence" value="ECO:0000250"/>
    <property type="project" value="UniProtKB"/>
</dbReference>
<dbReference type="GO" id="GO:0016020">
    <property type="term" value="C:membrane"/>
    <property type="evidence" value="ECO:0000318"/>
    <property type="project" value="GO_Central"/>
</dbReference>
<dbReference type="GO" id="GO:0140104">
    <property type="term" value="F:molecular carrier activity"/>
    <property type="evidence" value="ECO:0007669"/>
    <property type="project" value="Ensembl"/>
</dbReference>
<dbReference type="GO" id="GO:0007368">
    <property type="term" value="P:determination of left/right symmetry"/>
    <property type="evidence" value="ECO:0007669"/>
    <property type="project" value="Ensembl"/>
</dbReference>
<dbReference type="GO" id="GO:0060539">
    <property type="term" value="P:diaphragm development"/>
    <property type="evidence" value="ECO:0000315"/>
    <property type="project" value="UniProtKB"/>
</dbReference>
<dbReference type="GO" id="GO:0009953">
    <property type="term" value="P:dorsal/ventral pattern formation"/>
    <property type="evidence" value="ECO:0007669"/>
    <property type="project" value="Ensembl"/>
</dbReference>
<dbReference type="GO" id="GO:0009880">
    <property type="term" value="P:embryonic pattern specification"/>
    <property type="evidence" value="ECO:0007669"/>
    <property type="project" value="Ensembl"/>
</dbReference>
<dbReference type="GO" id="GO:0007225">
    <property type="term" value="P:patched ligand maturation"/>
    <property type="evidence" value="ECO:0007669"/>
    <property type="project" value="Ensembl"/>
</dbReference>
<dbReference type="GO" id="GO:0015833">
    <property type="term" value="P:peptide transport"/>
    <property type="evidence" value="ECO:0000250"/>
    <property type="project" value="UniProtKB"/>
</dbReference>
<dbReference type="GO" id="GO:0070207">
    <property type="term" value="P:protein homotrimerization"/>
    <property type="evidence" value="ECO:0000250"/>
    <property type="project" value="UniProtKB"/>
</dbReference>
<dbReference type="GO" id="GO:0050708">
    <property type="term" value="P:regulation of protein secretion"/>
    <property type="evidence" value="ECO:0000250"/>
    <property type="project" value="UniProtKB"/>
</dbReference>
<dbReference type="GO" id="GO:0007224">
    <property type="term" value="P:smoothened signaling pathway"/>
    <property type="evidence" value="ECO:0000318"/>
    <property type="project" value="GO_Central"/>
</dbReference>
<dbReference type="FunFam" id="1.20.1640.10:FF:000009">
    <property type="entry name" value="Dispatched homolog 1 (Drosophila)"/>
    <property type="match status" value="1"/>
</dbReference>
<dbReference type="FunFam" id="1.20.1640.10:FF:000011">
    <property type="entry name" value="Dispatched RND transporter family member 1"/>
    <property type="match status" value="1"/>
</dbReference>
<dbReference type="Gene3D" id="1.20.1640.10">
    <property type="entry name" value="Multidrug efflux transporter AcrB transmembrane domain"/>
    <property type="match status" value="2"/>
</dbReference>
<dbReference type="InterPro" id="IPR052081">
    <property type="entry name" value="Dispatched_Hh_regulator"/>
</dbReference>
<dbReference type="InterPro" id="IPR053958">
    <property type="entry name" value="HMGCR/SNAP/NPC1-like_SSD"/>
</dbReference>
<dbReference type="InterPro" id="IPR004869">
    <property type="entry name" value="MMPL_dom"/>
</dbReference>
<dbReference type="InterPro" id="IPR000731">
    <property type="entry name" value="SSD"/>
</dbReference>
<dbReference type="PANTHER" id="PTHR45951:SF4">
    <property type="entry name" value="PROTEIN DISPATCHED HOMOLOG 1"/>
    <property type="match status" value="1"/>
</dbReference>
<dbReference type="PANTHER" id="PTHR45951">
    <property type="entry name" value="PROTEIN DISPATCHED-RELATED"/>
    <property type="match status" value="1"/>
</dbReference>
<dbReference type="Pfam" id="PF03176">
    <property type="entry name" value="MMPL"/>
    <property type="match status" value="1"/>
</dbReference>
<dbReference type="Pfam" id="PF12349">
    <property type="entry name" value="Sterol-sensing"/>
    <property type="match status" value="1"/>
</dbReference>
<dbReference type="SUPFAM" id="SSF82866">
    <property type="entry name" value="Multidrug efflux transporter AcrB transmembrane domain"/>
    <property type="match status" value="2"/>
</dbReference>
<dbReference type="PROSITE" id="PS50156">
    <property type="entry name" value="SSD"/>
    <property type="match status" value="1"/>
</dbReference>
<comment type="function">
    <text evidence="1 4">Functions in hedgehog (Hh) signaling. Regulates the release and extracellular accumulation of cholesterol-modified hedgehog proteins and is hence required for effective production of the Hh signal (By similarity). Synergizes with SCUBE2 to cause an increase in SHH secretion (PubMed:22902404).</text>
</comment>
<comment type="subunit">
    <text evidence="4">Interacts with SHH via the cholesterol anchor of the dually lipid-modified SHH (ShhNp) (PubMed:22902404).</text>
</comment>
<comment type="interaction">
    <interactant intactId="EBI-10230179">
        <id>Q96F81</id>
    </interactant>
    <interactant intactId="EBI-2865663">
        <id>Q13571</id>
        <label>LAPTM5</label>
    </interactant>
    <organismsDiffer>false</organismsDiffer>
    <experiments>3</experiments>
</comment>
<comment type="interaction">
    <interactant intactId="EBI-10230179">
        <id>Q96F81</id>
    </interactant>
    <interactant intactId="EBI-720609">
        <id>O76024</id>
        <label>WFS1</label>
    </interactant>
    <organismsDiffer>false</organismsDiffer>
    <experiments>3</experiments>
</comment>
<comment type="subcellular location">
    <subcellularLocation>
        <location evidence="5">Membrane</location>
        <topology evidence="5">Multi-pass membrane protein</topology>
    </subcellularLocation>
</comment>
<comment type="similarity">
    <text evidence="5">Belongs to the dispatched family.</text>
</comment>
<comment type="sequence caution" evidence="5">
    <conflict type="miscellaneous discrepancy">
        <sequence resource="EMBL-CDS" id="AAH07734"/>
    </conflict>
    <text>Contaminating sequence. Potential poly-A sequence.</text>
</comment>
<comment type="sequence caution" evidence="5">
    <conflict type="frameshift">
        <sequence resource="EMBL-CDS" id="BAB14637"/>
    </conflict>
</comment>
<comment type="sequence caution" evidence="5">
    <conflict type="erroneous initiation">
        <sequence resource="EMBL-CDS" id="BAB15365"/>
    </conflict>
    <text>Truncated N-terminus.</text>
</comment>
<accession>Q96F81</accession>
<accession>Q8N7C2</accession>
<accession>Q96I92</accession>
<accession>Q9H698</accession>
<accession>Q9H8H9</accession>
<accession>Q9UFA2</accession>
<feature type="chain" id="PRO_0000310693" description="Protein dispatched homolog 1">
    <location>
        <begin position="1"/>
        <end position="1524"/>
    </location>
</feature>
<feature type="transmembrane region" description="Helical" evidence="2">
    <location>
        <begin position="190"/>
        <end position="210"/>
    </location>
</feature>
<feature type="transmembrane region" description="Helical" evidence="2">
    <location>
        <begin position="500"/>
        <end position="520"/>
    </location>
</feature>
<feature type="transmembrane region" description="Helical" evidence="2">
    <location>
        <begin position="525"/>
        <end position="545"/>
    </location>
</feature>
<feature type="transmembrane region" description="Helical" evidence="2">
    <location>
        <begin position="549"/>
        <end position="569"/>
    </location>
</feature>
<feature type="transmembrane region" description="Helical" evidence="2">
    <location>
        <begin position="604"/>
        <end position="624"/>
    </location>
</feature>
<feature type="transmembrane region" description="Helical" evidence="2">
    <location>
        <begin position="638"/>
        <end position="658"/>
    </location>
</feature>
<feature type="transmembrane region" description="Helical" evidence="2">
    <location>
        <begin position="719"/>
        <end position="739"/>
    </location>
</feature>
<feature type="transmembrane region" description="Helical" evidence="2">
    <location>
        <begin position="988"/>
        <end position="1008"/>
    </location>
</feature>
<feature type="transmembrane region" description="Helical" evidence="2">
    <location>
        <begin position="1010"/>
        <end position="1030"/>
    </location>
</feature>
<feature type="transmembrane region" description="Helical" evidence="2">
    <location>
        <begin position="1040"/>
        <end position="1060"/>
    </location>
</feature>
<feature type="transmembrane region" description="Helical" evidence="2">
    <location>
        <begin position="1079"/>
        <end position="1099"/>
    </location>
</feature>
<feature type="transmembrane region" description="Helical" evidence="2">
    <location>
        <begin position="1107"/>
        <end position="1127"/>
    </location>
</feature>
<feature type="domain" description="SSD" evidence="3">
    <location>
        <begin position="486"/>
        <end position="658"/>
    </location>
</feature>
<feature type="glycosylation site" description="N-linked (GlcNAc...) asparagine" evidence="2">
    <location>
        <position position="59"/>
    </location>
</feature>
<feature type="glycosylation site" description="N-linked (GlcNAc...) asparagine" evidence="2">
    <location>
        <position position="582"/>
    </location>
</feature>
<feature type="sequence variant" id="VAR_037077" description="In dbSNP:rs2609383.">
    <original>E</original>
    <variation>K</variation>
    <location>
        <position position="103"/>
    </location>
</feature>
<feature type="sequence conflict" description="In Ref. 2; BAC05373." evidence="5" ref="2">
    <original>M</original>
    <variation>I</variation>
    <location>
        <position position="195"/>
    </location>
</feature>
<feature type="sequence conflict" description="In Ref. 3; CAB61406." evidence="5" ref="3">
    <original>A</original>
    <variation>T</variation>
    <location>
        <position position="1247"/>
    </location>
</feature>
<feature type="sequence conflict" description="In Ref. 2; BAB14637." evidence="5" ref="2">
    <original>R</original>
    <variation>G</variation>
    <location>
        <position position="1379"/>
    </location>
</feature>
<feature type="sequence conflict" description="In Ref. 2; BAB14637." evidence="5" ref="2">
    <original>S</original>
    <variation>V</variation>
    <location>
        <position position="1392"/>
    </location>
</feature>
<feature type="sequence conflict" description="In Ref. 1; AAH11542." evidence="5" ref="1">
    <original>D</original>
    <variation>N</variation>
    <location>
        <position position="1408"/>
    </location>
</feature>
<keyword id="KW-0002">3D-structure</keyword>
<keyword id="KW-0217">Developmental protein</keyword>
<keyword id="KW-0325">Glycoprotein</keyword>
<keyword id="KW-0472">Membrane</keyword>
<keyword id="KW-1267">Proteomics identification</keyword>
<keyword id="KW-1185">Reference proteome</keyword>
<keyword id="KW-0812">Transmembrane</keyword>
<keyword id="KW-1133">Transmembrane helix</keyword>
<organism>
    <name type="scientific">Homo sapiens</name>
    <name type="common">Human</name>
    <dbReference type="NCBI Taxonomy" id="9606"/>
    <lineage>
        <taxon>Eukaryota</taxon>
        <taxon>Metazoa</taxon>
        <taxon>Chordata</taxon>
        <taxon>Craniata</taxon>
        <taxon>Vertebrata</taxon>
        <taxon>Euteleostomi</taxon>
        <taxon>Mammalia</taxon>
        <taxon>Eutheria</taxon>
        <taxon>Euarchontoglires</taxon>
        <taxon>Primates</taxon>
        <taxon>Haplorrhini</taxon>
        <taxon>Catarrhini</taxon>
        <taxon>Hominidae</taxon>
        <taxon>Homo</taxon>
    </lineage>
</organism>
<gene>
    <name type="primary">DISP1</name>
    <name type="synonym">DISPA</name>
</gene>